<feature type="chain" id="PRO_1000048409" description="Light-independent protochlorophyllide reductase subunit B">
    <location>
        <begin position="1"/>
        <end position="526"/>
    </location>
</feature>
<feature type="active site" description="Proton donor" evidence="1">
    <location>
        <position position="290"/>
    </location>
</feature>
<feature type="binding site" evidence="1">
    <location>
        <position position="36"/>
    </location>
    <ligand>
        <name>[4Fe-4S] cluster</name>
        <dbReference type="ChEBI" id="CHEBI:49883"/>
        <note>ligand shared with heterodimeric partner</note>
    </ligand>
</feature>
<feature type="binding site" evidence="1">
    <location>
        <begin position="425"/>
        <end position="426"/>
    </location>
    <ligand>
        <name>substrate</name>
    </ligand>
</feature>
<dbReference type="EC" id="1.3.7.7" evidence="1"/>
<dbReference type="EMBL" id="CP000552">
    <property type="protein sequence ID" value="ABM71817.1"/>
    <property type="molecule type" value="Genomic_DNA"/>
</dbReference>
<dbReference type="RefSeq" id="WP_011819924.1">
    <property type="nucleotide sequence ID" value="NC_008817.1"/>
</dbReference>
<dbReference type="SMR" id="A2BVK6"/>
<dbReference type="STRING" id="167542.P9515_06081"/>
<dbReference type="GeneID" id="60202062"/>
<dbReference type="KEGG" id="pmc:P9515_06081"/>
<dbReference type="eggNOG" id="COG2710">
    <property type="taxonomic scope" value="Bacteria"/>
</dbReference>
<dbReference type="HOGENOM" id="CLU_025470_0_0_3"/>
<dbReference type="OrthoDB" id="5717231at2"/>
<dbReference type="UniPathway" id="UPA00670"/>
<dbReference type="Proteomes" id="UP000001589">
    <property type="component" value="Chromosome"/>
</dbReference>
<dbReference type="GO" id="GO:0051539">
    <property type="term" value="F:4 iron, 4 sulfur cluster binding"/>
    <property type="evidence" value="ECO:0007669"/>
    <property type="project" value="UniProtKB-UniRule"/>
</dbReference>
<dbReference type="GO" id="GO:0005524">
    <property type="term" value="F:ATP binding"/>
    <property type="evidence" value="ECO:0007669"/>
    <property type="project" value="UniProtKB-UniRule"/>
</dbReference>
<dbReference type="GO" id="GO:0046872">
    <property type="term" value="F:metal ion binding"/>
    <property type="evidence" value="ECO:0007669"/>
    <property type="project" value="UniProtKB-KW"/>
</dbReference>
<dbReference type="GO" id="GO:0016730">
    <property type="term" value="F:oxidoreductase activity, acting on iron-sulfur proteins as donors"/>
    <property type="evidence" value="ECO:0007669"/>
    <property type="project" value="InterPro"/>
</dbReference>
<dbReference type="GO" id="GO:0016636">
    <property type="term" value="F:oxidoreductase activity, acting on the CH-CH group of donors, iron-sulfur protein as acceptor"/>
    <property type="evidence" value="ECO:0007669"/>
    <property type="project" value="UniProtKB-UniRule"/>
</dbReference>
<dbReference type="GO" id="GO:0036068">
    <property type="term" value="P:light-independent chlorophyll biosynthetic process"/>
    <property type="evidence" value="ECO:0007669"/>
    <property type="project" value="UniProtKB-UniRule"/>
</dbReference>
<dbReference type="GO" id="GO:0019685">
    <property type="term" value="P:photosynthesis, dark reaction"/>
    <property type="evidence" value="ECO:0007669"/>
    <property type="project" value="InterPro"/>
</dbReference>
<dbReference type="Gene3D" id="1.20.89.20">
    <property type="match status" value="1"/>
</dbReference>
<dbReference type="Gene3D" id="3.40.50.1980">
    <property type="entry name" value="Nitrogenase molybdenum iron protein domain"/>
    <property type="match status" value="3"/>
</dbReference>
<dbReference type="Gene3D" id="1.10.8.550">
    <property type="entry name" value="Proto-chlorophyllide reductase 57 kD subunit B"/>
    <property type="match status" value="1"/>
</dbReference>
<dbReference type="HAMAP" id="MF_00353">
    <property type="entry name" value="ChlB_BchB"/>
    <property type="match status" value="1"/>
</dbReference>
<dbReference type="InterPro" id="IPR050152">
    <property type="entry name" value="ChlB/BchB/BchZ"/>
</dbReference>
<dbReference type="InterPro" id="IPR013580">
    <property type="entry name" value="LI-POR_suB-like_C"/>
</dbReference>
<dbReference type="InterPro" id="IPR000510">
    <property type="entry name" value="Nase/OxRdtase_comp1"/>
</dbReference>
<dbReference type="InterPro" id="IPR042298">
    <property type="entry name" value="P-CP_red_C"/>
</dbReference>
<dbReference type="InterPro" id="IPR005969">
    <property type="entry name" value="Protochl_reductB"/>
</dbReference>
<dbReference type="InterPro" id="IPR016209">
    <property type="entry name" value="Protochlorophyllide_Rdtase"/>
</dbReference>
<dbReference type="NCBIfam" id="TIGR01278">
    <property type="entry name" value="DPOR_BchB"/>
    <property type="match status" value="1"/>
</dbReference>
<dbReference type="NCBIfam" id="NF002790">
    <property type="entry name" value="PRK02910.1-4"/>
    <property type="match status" value="1"/>
</dbReference>
<dbReference type="PANTHER" id="PTHR33712">
    <property type="entry name" value="LIGHT-INDEPENDENT PROTOCHLOROPHYLLIDE REDUCTASE SUBUNIT B"/>
    <property type="match status" value="1"/>
</dbReference>
<dbReference type="PANTHER" id="PTHR33712:SF7">
    <property type="entry name" value="LIGHT-INDEPENDENT PROTOCHLOROPHYLLIDE REDUCTASE SUBUNIT B"/>
    <property type="match status" value="1"/>
</dbReference>
<dbReference type="Pfam" id="PF00148">
    <property type="entry name" value="Oxidored_nitro"/>
    <property type="match status" value="1"/>
</dbReference>
<dbReference type="Pfam" id="PF08369">
    <property type="entry name" value="PCP_red"/>
    <property type="match status" value="1"/>
</dbReference>
<dbReference type="PIRSF" id="PIRSF000163">
    <property type="entry name" value="PCP_ChlB"/>
    <property type="match status" value="1"/>
</dbReference>
<dbReference type="SUPFAM" id="SSF53807">
    <property type="entry name" value="Helical backbone' metal receptor"/>
    <property type="match status" value="1"/>
</dbReference>
<protein>
    <recommendedName>
        <fullName evidence="1">Light-independent protochlorophyllide reductase subunit B</fullName>
        <shortName evidence="1">DPOR subunit B</shortName>
        <shortName evidence="1">LI-POR subunit B</shortName>
        <ecNumber evidence="1">1.3.7.7</ecNumber>
    </recommendedName>
</protein>
<gene>
    <name evidence="1" type="primary">chlB</name>
    <name type="ordered locus">P9515_06081</name>
</gene>
<sequence>MELTLWTYEGPPHVGAMRVASSMKEIHYVLHAPQGDTYADLLFTMIERRGKRPPVTYTTFQARDLGGDTAELVKRNISEAVERFKPKTLLIGESCTAELIQDQPGALAKGMGFNIPIVNLELPAYSKKENWGASETFYQIIRTLLNDKTNEINNINPQRWKSLGRRPKVNILGPTLLGFRCRDDVIEIQRILSEQGIDTNVVAPLGSSPDDIKRLIDADINICLYQEIAETSCEWLKRKCGMEFTTTIPIGIKNTINFINEVHDKLGLPLTNKEELEHKSKLPWYSKSIDSNYLTGKRVFIFGDGTHAIAAAKIAKDELGFEVVGLGTYSREMARQVRAAAKDLNIEALITNSYLEVEDAMKKASPELVLGTQMERHSAKRLGIPCSVISTPMHVQDVPARYSPQMGWEGANVIFDDWVHPLMMGLEEHLIDMFKHDFEFVDGHQSHLGHTATKGLDNIEDEHGLKNDTLKKNGGVLWTESGRAELTKVPFFVRGKVKSNTEKYALSKGLPEISDETLYDAKAYFS</sequence>
<name>CHLB_PROM5</name>
<keyword id="KW-0004">4Fe-4S</keyword>
<keyword id="KW-0067">ATP-binding</keyword>
<keyword id="KW-0149">Chlorophyll biosynthesis</keyword>
<keyword id="KW-0408">Iron</keyword>
<keyword id="KW-0411">Iron-sulfur</keyword>
<keyword id="KW-0479">Metal-binding</keyword>
<keyword id="KW-0547">Nucleotide-binding</keyword>
<keyword id="KW-0560">Oxidoreductase</keyword>
<keyword id="KW-0602">Photosynthesis</keyword>
<comment type="function">
    <text evidence="1">Component of the dark-operative protochlorophyllide reductase (DPOR) that uses Mg-ATP and reduced ferredoxin to reduce ring D of protochlorophyllide (Pchlide) to form chlorophyllide a (Chlide). This reaction is light-independent. The NB-protein (ChlN-ChlB) is the catalytic component of the complex.</text>
</comment>
<comment type="catalytic activity">
    <reaction evidence="1">
        <text>chlorophyllide a + oxidized 2[4Fe-4S]-[ferredoxin] + 2 ADP + 2 phosphate = protochlorophyllide a + reduced 2[4Fe-4S]-[ferredoxin] + 2 ATP + 2 H2O</text>
        <dbReference type="Rhea" id="RHEA:28202"/>
        <dbReference type="Rhea" id="RHEA-COMP:10002"/>
        <dbReference type="Rhea" id="RHEA-COMP:10004"/>
        <dbReference type="ChEBI" id="CHEBI:15377"/>
        <dbReference type="ChEBI" id="CHEBI:30616"/>
        <dbReference type="ChEBI" id="CHEBI:33722"/>
        <dbReference type="ChEBI" id="CHEBI:33723"/>
        <dbReference type="ChEBI" id="CHEBI:43474"/>
        <dbReference type="ChEBI" id="CHEBI:83348"/>
        <dbReference type="ChEBI" id="CHEBI:83350"/>
        <dbReference type="ChEBI" id="CHEBI:456216"/>
        <dbReference type="EC" id="1.3.7.7"/>
    </reaction>
</comment>
<comment type="cofactor">
    <cofactor evidence="1">
        <name>[4Fe-4S] cluster</name>
        <dbReference type="ChEBI" id="CHEBI:49883"/>
    </cofactor>
    <text evidence="1">Binds 1 [4Fe-4S] cluster per heterodimer. The cluster is bound at the heterodimer interface by residues from both subunits.</text>
</comment>
<comment type="pathway">
    <text evidence="1">Porphyrin-containing compound metabolism; chlorophyll biosynthesis (light-independent).</text>
</comment>
<comment type="subunit">
    <text evidence="1">Protochlorophyllide reductase is composed of three subunits; ChlL, ChlN and ChlB. Forms a heterotetramer of two ChlB and two ChlN subunits.</text>
</comment>
<comment type="similarity">
    <text evidence="1">Belongs to the ChlB/BchB/BchZ family.</text>
</comment>
<evidence type="ECO:0000255" key="1">
    <source>
        <dbReference type="HAMAP-Rule" id="MF_00353"/>
    </source>
</evidence>
<reference key="1">
    <citation type="journal article" date="2007" name="PLoS Genet.">
        <title>Patterns and implications of gene gain and loss in the evolution of Prochlorococcus.</title>
        <authorList>
            <person name="Kettler G.C."/>
            <person name="Martiny A.C."/>
            <person name="Huang K."/>
            <person name="Zucker J."/>
            <person name="Coleman M.L."/>
            <person name="Rodrigue S."/>
            <person name="Chen F."/>
            <person name="Lapidus A."/>
            <person name="Ferriera S."/>
            <person name="Johnson J."/>
            <person name="Steglich C."/>
            <person name="Church G.M."/>
            <person name="Richardson P."/>
            <person name="Chisholm S.W."/>
        </authorList>
    </citation>
    <scope>NUCLEOTIDE SEQUENCE [LARGE SCALE GENOMIC DNA]</scope>
    <source>
        <strain>MIT 9515</strain>
    </source>
</reference>
<accession>A2BVK6</accession>
<organism>
    <name type="scientific">Prochlorococcus marinus (strain MIT 9515)</name>
    <dbReference type="NCBI Taxonomy" id="167542"/>
    <lineage>
        <taxon>Bacteria</taxon>
        <taxon>Bacillati</taxon>
        <taxon>Cyanobacteriota</taxon>
        <taxon>Cyanophyceae</taxon>
        <taxon>Synechococcales</taxon>
        <taxon>Prochlorococcaceae</taxon>
        <taxon>Prochlorococcus</taxon>
    </lineage>
</organism>
<proteinExistence type="inferred from homology"/>